<sequence length="70" mass="8258">MIVALLYLILAGAYLLVIPIAVLFYLKQRWYVASSIERLLMYFLVFFFFPGLLVLSPFANFRPQRRQVQV</sequence>
<accession>B2J0I9</accession>
<proteinExistence type="inferred from homology"/>
<evidence type="ECO:0000255" key="1">
    <source>
        <dbReference type="HAMAP-Rule" id="MF_01355"/>
    </source>
</evidence>
<keyword id="KW-0472">Membrane</keyword>
<keyword id="KW-0520">NAD</keyword>
<keyword id="KW-0521">NADP</keyword>
<keyword id="KW-0618">Plastoquinone</keyword>
<keyword id="KW-0874">Quinone</keyword>
<keyword id="KW-1185">Reference proteome</keyword>
<keyword id="KW-0793">Thylakoid</keyword>
<keyword id="KW-1278">Translocase</keyword>
<keyword id="KW-0812">Transmembrane</keyword>
<keyword id="KW-1133">Transmembrane helix</keyword>
<keyword id="KW-0813">Transport</keyword>
<dbReference type="EC" id="7.1.1.-" evidence="1"/>
<dbReference type="EMBL" id="CP001037">
    <property type="protein sequence ID" value="ACC84879.1"/>
    <property type="molecule type" value="Genomic_DNA"/>
</dbReference>
<dbReference type="RefSeq" id="WP_012412810.1">
    <property type="nucleotide sequence ID" value="NC_010628.1"/>
</dbReference>
<dbReference type="SMR" id="B2J0I9"/>
<dbReference type="STRING" id="63737.Npun_F6621"/>
<dbReference type="EnsemblBacteria" id="ACC84879">
    <property type="protein sequence ID" value="ACC84879"/>
    <property type="gene ID" value="Npun_F6621"/>
</dbReference>
<dbReference type="KEGG" id="npu:Npun_F6621"/>
<dbReference type="eggNOG" id="ENOG5032ZM4">
    <property type="taxonomic scope" value="Bacteria"/>
</dbReference>
<dbReference type="HOGENOM" id="CLU_171077_0_0_3"/>
<dbReference type="Proteomes" id="UP000001191">
    <property type="component" value="Chromosome"/>
</dbReference>
<dbReference type="GO" id="GO:0031676">
    <property type="term" value="C:plasma membrane-derived thylakoid membrane"/>
    <property type="evidence" value="ECO:0007669"/>
    <property type="project" value="UniProtKB-SubCell"/>
</dbReference>
<dbReference type="GO" id="GO:0016655">
    <property type="term" value="F:oxidoreductase activity, acting on NAD(P)H, quinone or similar compound as acceptor"/>
    <property type="evidence" value="ECO:0007669"/>
    <property type="project" value="UniProtKB-UniRule"/>
</dbReference>
<dbReference type="GO" id="GO:0048038">
    <property type="term" value="F:quinone binding"/>
    <property type="evidence" value="ECO:0007669"/>
    <property type="project" value="UniProtKB-KW"/>
</dbReference>
<dbReference type="HAMAP" id="MF_01355">
    <property type="entry name" value="NDH1_NDH1L"/>
    <property type="match status" value="1"/>
</dbReference>
<dbReference type="InterPro" id="IPR019654">
    <property type="entry name" value="NADH-quinone_OxRdatse_su_L"/>
</dbReference>
<dbReference type="PANTHER" id="PTHR36727">
    <property type="entry name" value="NAD(P)H-QUINONE OXIDOREDUCTASE SUBUNIT L, CHLOROPLASTIC"/>
    <property type="match status" value="1"/>
</dbReference>
<dbReference type="PANTHER" id="PTHR36727:SF2">
    <property type="entry name" value="NAD(P)H-QUINONE OXIDOREDUCTASE SUBUNIT L, CHLOROPLASTIC"/>
    <property type="match status" value="1"/>
</dbReference>
<dbReference type="Pfam" id="PF10716">
    <property type="entry name" value="NdhL"/>
    <property type="match status" value="1"/>
</dbReference>
<organism>
    <name type="scientific">Nostoc punctiforme (strain ATCC 29133 / PCC 73102)</name>
    <dbReference type="NCBI Taxonomy" id="63737"/>
    <lineage>
        <taxon>Bacteria</taxon>
        <taxon>Bacillati</taxon>
        <taxon>Cyanobacteriota</taxon>
        <taxon>Cyanophyceae</taxon>
        <taxon>Nostocales</taxon>
        <taxon>Nostocaceae</taxon>
        <taxon>Nostoc</taxon>
    </lineage>
</organism>
<protein>
    <recommendedName>
        <fullName evidence="1">NAD(P)H-quinone oxidoreductase subunit L</fullName>
        <ecNumber evidence="1">7.1.1.-</ecNumber>
    </recommendedName>
    <alternativeName>
        <fullName evidence="1">NAD(P)H dehydrogenase I subunit L</fullName>
    </alternativeName>
    <alternativeName>
        <fullName>NDH-1 subunit L</fullName>
    </alternativeName>
    <alternativeName>
        <fullName>NDH-L</fullName>
    </alternativeName>
</protein>
<feature type="chain" id="PRO_0000353670" description="NAD(P)H-quinone oxidoreductase subunit L">
    <location>
        <begin position="1"/>
        <end position="70"/>
    </location>
</feature>
<feature type="transmembrane region" description="Helical" evidence="1">
    <location>
        <begin position="2"/>
        <end position="22"/>
    </location>
</feature>
<feature type="transmembrane region" description="Helical" evidence="1">
    <location>
        <begin position="39"/>
        <end position="59"/>
    </location>
</feature>
<gene>
    <name evidence="1" type="primary">ndhL</name>
    <name type="ordered locus">Npun_F6621</name>
</gene>
<comment type="function">
    <text evidence="1">NDH-1 shuttles electrons from an unknown electron donor, via FMN and iron-sulfur (Fe-S) centers, to quinones in the respiratory and/or the photosynthetic chain. The immediate electron acceptor for the enzyme in this species is believed to be plastoquinone. Couples the redox reaction to proton translocation, and thus conserves the redox energy in a proton gradient. Cyanobacterial NDH-1 also plays a role in inorganic carbon-concentration.</text>
</comment>
<comment type="catalytic activity">
    <reaction evidence="1">
        <text>a plastoquinone + NADH + (n+1) H(+)(in) = a plastoquinol + NAD(+) + n H(+)(out)</text>
        <dbReference type="Rhea" id="RHEA:42608"/>
        <dbReference type="Rhea" id="RHEA-COMP:9561"/>
        <dbReference type="Rhea" id="RHEA-COMP:9562"/>
        <dbReference type="ChEBI" id="CHEBI:15378"/>
        <dbReference type="ChEBI" id="CHEBI:17757"/>
        <dbReference type="ChEBI" id="CHEBI:57540"/>
        <dbReference type="ChEBI" id="CHEBI:57945"/>
        <dbReference type="ChEBI" id="CHEBI:62192"/>
    </reaction>
</comment>
<comment type="catalytic activity">
    <reaction evidence="1">
        <text>a plastoquinone + NADPH + (n+1) H(+)(in) = a plastoquinol + NADP(+) + n H(+)(out)</text>
        <dbReference type="Rhea" id="RHEA:42612"/>
        <dbReference type="Rhea" id="RHEA-COMP:9561"/>
        <dbReference type="Rhea" id="RHEA-COMP:9562"/>
        <dbReference type="ChEBI" id="CHEBI:15378"/>
        <dbReference type="ChEBI" id="CHEBI:17757"/>
        <dbReference type="ChEBI" id="CHEBI:57783"/>
        <dbReference type="ChEBI" id="CHEBI:58349"/>
        <dbReference type="ChEBI" id="CHEBI:62192"/>
    </reaction>
</comment>
<comment type="subunit">
    <text evidence="1">NDH-1 can be composed of about 15 different subunits; different subcomplexes with different compositions have been identified which probably have different functions.</text>
</comment>
<comment type="subcellular location">
    <subcellularLocation>
        <location evidence="1">Cellular thylakoid membrane</location>
        <topology evidence="1">Multi-pass membrane protein</topology>
    </subcellularLocation>
</comment>
<comment type="similarity">
    <text evidence="1">Belongs to the complex I NdhL subunit family.</text>
</comment>
<reference key="1">
    <citation type="journal article" date="2013" name="Plant Physiol.">
        <title>A Nostoc punctiforme Sugar Transporter Necessary to Establish a Cyanobacterium-Plant Symbiosis.</title>
        <authorList>
            <person name="Ekman M."/>
            <person name="Picossi S."/>
            <person name="Campbell E.L."/>
            <person name="Meeks J.C."/>
            <person name="Flores E."/>
        </authorList>
    </citation>
    <scope>NUCLEOTIDE SEQUENCE [LARGE SCALE GENOMIC DNA]</scope>
    <source>
        <strain>ATCC 29133 / PCC 73102</strain>
    </source>
</reference>
<name>NDHL_NOSP7</name>